<sequence length="94" mass="10551">MSRPRIGAAAAITQLEGWAIAPNHKDAIVKTFRFDDFNQAFGFMTRVALMADKLDHHPEWFNVYNRVEVLLTTHDADGVTDLDLTLAKFMDSAA</sequence>
<name>PHS_CAUVN</name>
<evidence type="ECO:0000255" key="1">
    <source>
        <dbReference type="HAMAP-Rule" id="MF_00434"/>
    </source>
</evidence>
<dbReference type="EC" id="4.2.1.96" evidence="1"/>
<dbReference type="EMBL" id="CP001340">
    <property type="protein sequence ID" value="ACL93712.1"/>
    <property type="molecule type" value="Genomic_DNA"/>
</dbReference>
<dbReference type="RefSeq" id="WP_010918134.1">
    <property type="nucleotide sequence ID" value="NC_011916.1"/>
</dbReference>
<dbReference type="RefSeq" id="YP_002515620.1">
    <property type="nucleotide sequence ID" value="NC_011916.1"/>
</dbReference>
<dbReference type="SMR" id="B8GYB5"/>
<dbReference type="GeneID" id="7330291"/>
<dbReference type="KEGG" id="ccs:CCNA_00245"/>
<dbReference type="PATRIC" id="fig|565050.3.peg.240"/>
<dbReference type="HOGENOM" id="CLU_081974_3_2_5"/>
<dbReference type="OrthoDB" id="9794987at2"/>
<dbReference type="PhylomeDB" id="B8GYB5"/>
<dbReference type="Proteomes" id="UP000001364">
    <property type="component" value="Chromosome"/>
</dbReference>
<dbReference type="GO" id="GO:0008124">
    <property type="term" value="F:4-alpha-hydroxytetrahydrobiopterin dehydratase activity"/>
    <property type="evidence" value="ECO:0007669"/>
    <property type="project" value="UniProtKB-UniRule"/>
</dbReference>
<dbReference type="GO" id="GO:0006729">
    <property type="term" value="P:tetrahydrobiopterin biosynthetic process"/>
    <property type="evidence" value="ECO:0007669"/>
    <property type="project" value="InterPro"/>
</dbReference>
<dbReference type="CDD" id="cd00914">
    <property type="entry name" value="PCD_DCoH_subfamily_b"/>
    <property type="match status" value="1"/>
</dbReference>
<dbReference type="Gene3D" id="3.30.1360.20">
    <property type="entry name" value="Transcriptional coactivator/pterin dehydratase"/>
    <property type="match status" value="1"/>
</dbReference>
<dbReference type="HAMAP" id="MF_00434">
    <property type="entry name" value="Pterin_4_alpha"/>
    <property type="match status" value="1"/>
</dbReference>
<dbReference type="InterPro" id="IPR036428">
    <property type="entry name" value="PCD_sf"/>
</dbReference>
<dbReference type="InterPro" id="IPR001533">
    <property type="entry name" value="Pterin_deHydtase"/>
</dbReference>
<dbReference type="NCBIfam" id="NF002018">
    <property type="entry name" value="PRK00823.1-3"/>
    <property type="match status" value="1"/>
</dbReference>
<dbReference type="PANTHER" id="PTHR12599">
    <property type="entry name" value="PTERIN-4-ALPHA-CARBINOLAMINE DEHYDRATASE"/>
    <property type="match status" value="1"/>
</dbReference>
<dbReference type="PANTHER" id="PTHR12599:SF0">
    <property type="entry name" value="PTERIN-4-ALPHA-CARBINOLAMINE DEHYDRATASE"/>
    <property type="match status" value="1"/>
</dbReference>
<dbReference type="Pfam" id="PF01329">
    <property type="entry name" value="Pterin_4a"/>
    <property type="match status" value="1"/>
</dbReference>
<dbReference type="SUPFAM" id="SSF55248">
    <property type="entry name" value="PCD-like"/>
    <property type="match status" value="1"/>
</dbReference>
<accession>B8GYB5</accession>
<protein>
    <recommendedName>
        <fullName evidence="1">Putative pterin-4-alpha-carbinolamine dehydratase</fullName>
        <shortName evidence="1">PHS</shortName>
        <ecNumber evidence="1">4.2.1.96</ecNumber>
    </recommendedName>
    <alternativeName>
        <fullName evidence="1">4-alpha-hydroxy-tetrahydropterin dehydratase</fullName>
    </alternativeName>
    <alternativeName>
        <fullName evidence="1">Pterin carbinolamine dehydratase</fullName>
        <shortName evidence="1">PCD</shortName>
    </alternativeName>
</protein>
<reference key="1">
    <citation type="journal article" date="2010" name="J. Bacteriol.">
        <title>The genetic basis of laboratory adaptation in Caulobacter crescentus.</title>
        <authorList>
            <person name="Marks M.E."/>
            <person name="Castro-Rojas C.M."/>
            <person name="Teiling C."/>
            <person name="Du L."/>
            <person name="Kapatral V."/>
            <person name="Walunas T.L."/>
            <person name="Crosson S."/>
        </authorList>
    </citation>
    <scope>NUCLEOTIDE SEQUENCE [LARGE SCALE GENOMIC DNA]</scope>
    <source>
        <strain>NA1000 / CB15N</strain>
    </source>
</reference>
<proteinExistence type="inferred from homology"/>
<gene>
    <name type="ordered locus">CCNA_00245</name>
</gene>
<organism>
    <name type="scientific">Caulobacter vibrioides (strain NA1000 / CB15N)</name>
    <name type="common">Caulobacter crescentus</name>
    <dbReference type="NCBI Taxonomy" id="565050"/>
    <lineage>
        <taxon>Bacteria</taxon>
        <taxon>Pseudomonadati</taxon>
        <taxon>Pseudomonadota</taxon>
        <taxon>Alphaproteobacteria</taxon>
        <taxon>Caulobacterales</taxon>
        <taxon>Caulobacteraceae</taxon>
        <taxon>Caulobacter</taxon>
    </lineage>
</organism>
<keyword id="KW-0456">Lyase</keyword>
<keyword id="KW-1185">Reference proteome</keyword>
<feature type="chain" id="PRO_1000134947" description="Putative pterin-4-alpha-carbinolamine dehydratase">
    <location>
        <begin position="1"/>
        <end position="94"/>
    </location>
</feature>
<comment type="catalytic activity">
    <reaction evidence="1">
        <text>(4aS,6R)-4a-hydroxy-L-erythro-5,6,7,8-tetrahydrobiopterin = (6R)-L-erythro-6,7-dihydrobiopterin + H2O</text>
        <dbReference type="Rhea" id="RHEA:11920"/>
        <dbReference type="ChEBI" id="CHEBI:15377"/>
        <dbReference type="ChEBI" id="CHEBI:15642"/>
        <dbReference type="ChEBI" id="CHEBI:43120"/>
        <dbReference type="EC" id="4.2.1.96"/>
    </reaction>
</comment>
<comment type="similarity">
    <text evidence="1">Belongs to the pterin-4-alpha-carbinolamine dehydratase family.</text>
</comment>